<gene>
    <name evidence="24" type="primary">Scn2a</name>
    <name type="synonym">Scn2a1</name>
</gene>
<evidence type="ECO:0000250" key="1">
    <source>
        <dbReference type="UniProtKB" id="B1AWN6"/>
    </source>
</evidence>
<evidence type="ECO:0000250" key="2">
    <source>
        <dbReference type="UniProtKB" id="D0E0C2"/>
    </source>
</evidence>
<evidence type="ECO:0000250" key="3">
    <source>
        <dbReference type="UniProtKB" id="P15389"/>
    </source>
</evidence>
<evidence type="ECO:0000250" key="4">
    <source>
        <dbReference type="UniProtKB" id="Q99250"/>
    </source>
</evidence>
<evidence type="ECO:0000255" key="5"/>
<evidence type="ECO:0000255" key="6">
    <source>
        <dbReference type="PROSITE-ProRule" id="PRU00116"/>
    </source>
</evidence>
<evidence type="ECO:0000256" key="7">
    <source>
        <dbReference type="SAM" id="MobiDB-lite"/>
    </source>
</evidence>
<evidence type="ECO:0000269" key="8">
    <source>
    </source>
</evidence>
<evidence type="ECO:0000269" key="9">
    <source>
    </source>
</evidence>
<evidence type="ECO:0000269" key="10">
    <source>
    </source>
</evidence>
<evidence type="ECO:0000269" key="11">
    <source>
    </source>
</evidence>
<evidence type="ECO:0000269" key="12">
    <source>
    </source>
</evidence>
<evidence type="ECO:0000269" key="13">
    <source>
    </source>
</evidence>
<evidence type="ECO:0000269" key="14">
    <source>
    </source>
</evidence>
<evidence type="ECO:0000269" key="15">
    <source>
    </source>
</evidence>
<evidence type="ECO:0000269" key="16">
    <source>
    </source>
</evidence>
<evidence type="ECO:0000269" key="17">
    <source>
    </source>
</evidence>
<evidence type="ECO:0000269" key="18">
    <source>
    </source>
</evidence>
<evidence type="ECO:0000269" key="19">
    <source>
    </source>
</evidence>
<evidence type="ECO:0000269" key="20">
    <source>
    </source>
</evidence>
<evidence type="ECO:0000269" key="21">
    <source>
    </source>
</evidence>
<evidence type="ECO:0000305" key="22"/>
<evidence type="ECO:0000305" key="23">
    <source>
    </source>
</evidence>
<evidence type="ECO:0000312" key="24">
    <source>
        <dbReference type="RGD" id="3632"/>
    </source>
</evidence>
<evidence type="ECO:0007744" key="25">
    <source>
    </source>
</evidence>
<evidence type="ECO:0007744" key="26">
    <source>
    </source>
</evidence>
<evidence type="ECO:0007829" key="27">
    <source>
        <dbReference type="PDB" id="1BYY"/>
    </source>
</evidence>
<evidence type="ECO:0007829" key="28">
    <source>
        <dbReference type="PDB" id="2KXW"/>
    </source>
</evidence>
<reference key="1">
    <citation type="journal article" date="1986" name="Nature">
        <title>Existence of distinct sodium channel messenger RNAs in rat brain.</title>
        <authorList>
            <person name="Noda M."/>
            <person name="Ikeda T."/>
            <person name="Kayano T."/>
            <person name="Suzuki H."/>
            <person name="Takeshima H."/>
            <person name="Kurasaki M."/>
            <person name="Takahashi H."/>
            <person name="Numa S."/>
        </authorList>
    </citation>
    <scope>NUCLEOTIDE SEQUENCE [MRNA]</scope>
</reference>
<reference key="2">
    <citation type="journal article" date="1991" name="Science">
        <title>A phosphorylation site in the Na+ channel required for modulation by protein kinase C.</title>
        <authorList>
            <person name="West J.W."/>
            <person name="Numann R."/>
            <person name="Murphy B.J."/>
            <person name="Scheuer T."/>
            <person name="Catterall W.A."/>
        </authorList>
    </citation>
    <scope>PHOSPHORYLATION AT SER-1506</scope>
    <scope>MUTAGENESIS OF SER-1506</scope>
</reference>
<reference key="3">
    <citation type="journal article" date="1992" name="J. Biol. Chem.">
        <title>Phosphorylation of purified rat brain Na+ channel reconstituted into phospholipid vesicles by protein kinase C.</title>
        <authorList>
            <person name="Murphy B.J."/>
            <person name="Catterall W.A."/>
        </authorList>
    </citation>
    <scope>PHOSPHORYLATION AT SER-554; SER-573; SER-576 AND SER-1506</scope>
</reference>
<reference key="4">
    <citation type="journal article" date="2000" name="Biophys. J.">
        <title>Neuronal death and perinatal lethality in voltage-gated sodium channel alpha(II)-deficient mice.</title>
        <authorList>
            <person name="Planells-Cases R."/>
            <person name="Caprini M."/>
            <person name="Zhang J."/>
            <person name="Rockenstein E.M."/>
            <person name="Rivera R.R."/>
            <person name="Murre C."/>
            <person name="Masliah E."/>
            <person name="Montal M."/>
        </authorList>
    </citation>
    <scope>TISSUE SPECIFICITY</scope>
    <scope>SUBCELLULAR LOCATION</scope>
</reference>
<reference key="5">
    <citation type="journal article" date="2001" name="Neuroscience">
        <title>A gain-of-function mutation in the sodium channel gene Scn2a results in seizures and behavioral abnormalities.</title>
        <authorList>
            <person name="Kearney J.A."/>
            <person name="Plummer N.W."/>
            <person name="Smith M.R."/>
            <person name="Kapur J."/>
            <person name="Cummins T.R."/>
            <person name="Waxman S.G."/>
            <person name="Goldin A.L."/>
            <person name="Meisler M.H."/>
        </authorList>
    </citation>
    <scope>FUNCTION</scope>
    <scope>MUTAGENESIS OF 879-GLY--LEU-881</scope>
</reference>
<reference key="6">
    <citation type="journal article" date="2005" name="Am. J. Physiol.">
        <title>Molecular determinants of voltage-gated sodium channel regulation by the Nedd4/Nedd4-like proteins.</title>
        <authorList>
            <person name="Rougier J.-S."/>
            <person name="van Bemmelen M.X."/>
            <person name="Bruce M.C."/>
            <person name="Jespersen T."/>
            <person name="Gavillet B."/>
            <person name="Apotheloz F."/>
            <person name="Cordonier S."/>
            <person name="Staub O."/>
            <person name="Rotin D."/>
            <person name="Abriel H."/>
        </authorList>
    </citation>
    <scope>INTERACTION WITH NEDD4L</scope>
    <scope>POSSIBLE UBIQUITINATION</scope>
    <scope>MUTAGENESIS OF TYR-1975</scope>
</reference>
<reference key="7">
    <citation type="journal article" date="2006" name="Proc. Natl. Acad. Sci. U.S.A.">
        <title>Quantitative phosphoproteomics of vasopressin-sensitive renal cells: regulation of aquaporin-2 phosphorylation at two sites.</title>
        <authorList>
            <person name="Hoffert J.D."/>
            <person name="Pisitkun T."/>
            <person name="Wang G."/>
            <person name="Shen R.-F."/>
            <person name="Knepper M.A."/>
        </authorList>
    </citation>
    <scope>PHOSPHORYLATION [LARGE SCALE ANALYSIS] AT THR-1963</scope>
    <scope>IDENTIFICATION BY MASS SPECTROMETRY [LARGE SCALE ANALYSIS]</scope>
</reference>
<reference key="8">
    <citation type="journal article" date="2010" name="Biochem. J.">
        <title>Molecular determination of selectivity of the site 3 modulator (BmK I) to sodium channels in the CNS: a clue to the importance of Nav1.6 in BmK I-induced neuronal hyperexcitability.</title>
        <authorList>
            <person name="He H."/>
            <person name="Liu Z."/>
            <person name="Dong B."/>
            <person name="Zhou J."/>
            <person name="Zhu H."/>
            <person name="Ji Y."/>
        </authorList>
    </citation>
    <scope>INTERACTION WITH SCORPION TOXIN BMK M1</scope>
    <scope>MUTAGENESIS OF GLU-1613</scope>
</reference>
<reference key="9">
    <citation type="journal article" date="2010" name="J. Proteome Res.">
        <title>Multisite phosphorylation of voltage-gated sodium channel alpha subunits from rat brain.</title>
        <authorList>
            <person name="Berendt F.J."/>
            <person name="Park K.S."/>
            <person name="Trimmer J.S."/>
        </authorList>
    </citation>
    <scope>PHOSPHORYLATION AT SER-4; SER-468; SER-471; SER-484; SER-528; SER-554; SER-610; SER-623; SER-687; SER-688; SER-721; SER-1930; THR-1966 AND SER-1971</scope>
</reference>
<reference key="10">
    <citation type="journal article" date="2012" name="Nat. Commun.">
        <title>Quantitative maps of protein phosphorylation sites across 14 different rat organs and tissues.</title>
        <authorList>
            <person name="Lundby A."/>
            <person name="Secher A."/>
            <person name="Lage K."/>
            <person name="Nordsborg N.B."/>
            <person name="Dmytriyev A."/>
            <person name="Lundby C."/>
            <person name="Olsen J.V."/>
        </authorList>
    </citation>
    <scope>PHOSPHORYLATION [LARGE SCALE ANALYSIS] AT SER-484; SER-526; SER-528; SER-531; SER-553; SER-554; SER-558; SER-589; SER-721 AND THR-1943</scope>
    <scope>IDENTIFICATION BY MASS SPECTROMETRY [LARGE SCALE ANALYSIS]</scope>
</reference>
<reference key="11">
    <citation type="journal article" date="2013" name="Proc. Natl. Acad. Sci. U.S.A.">
        <title>Crystallographic insights into sodium-channel modulation by the beta4 subunit.</title>
        <authorList>
            <person name="Gilchrist J."/>
            <person name="Das S."/>
            <person name="Van Petegem F."/>
            <person name="Bosmans F."/>
        </authorList>
    </citation>
    <scope>FUNCTION</scope>
    <scope>TRANSPORTER ACTIVITY</scope>
    <scope>SUBCELLULAR LOCATION</scope>
    <scope>SUBUNIT</scope>
    <scope>DISULFIDE BOND</scope>
    <scope>INTERACTION WITH SCN4B</scope>
</reference>
<reference key="12">
    <citation type="journal article" date="2014" name="Proc. Natl. Acad. Sci. U.S.A.">
        <title>A disulfide tether stabilizes the block of sodium channels by the conotoxin muO[section sign]-GVIIJ.</title>
        <authorList>
            <person name="Gajewiak J."/>
            <person name="Azam L."/>
            <person name="Imperial J."/>
            <person name="Walewska A."/>
            <person name="Green B.R."/>
            <person name="Bandyopadhyay P.K."/>
            <person name="Raghuraman S."/>
            <person name="Ueberheide B."/>
            <person name="Bern M."/>
            <person name="Zhou H.M."/>
            <person name="Minassian N.A."/>
            <person name="Hagan R.H."/>
            <person name="Flinspach M."/>
            <person name="Liu Y."/>
            <person name="Bulaj G."/>
            <person name="Wickenden A.D."/>
            <person name="Olivera B.M."/>
            <person name="Yoshikami D."/>
            <person name="Zhang M.M."/>
        </authorList>
    </citation>
    <scope>MUTAGENESIS OF CYS-910</scope>
    <scope>INTERACTION WITH THE CONOTOXIN GVIIJ</scope>
    <scope>DISULFIDE BOND</scope>
</reference>
<reference key="13">
    <citation type="journal article" date="2015" name="Biochemistry">
        <title>Probing the redox states of sodium channel cysteines at the binding site of muO[section sign]-conotoxin GVIIJ.</title>
        <authorList>
            <person name="Zhang M.M."/>
            <person name="Gajewiak J."/>
            <person name="Azam L."/>
            <person name="Bulaj G."/>
            <person name="Olivera B.M."/>
            <person name="Yoshikami D."/>
        </authorList>
    </citation>
    <scope>MUTAGENESIS OF PHE-385</scope>
</reference>
<reference key="14">
    <citation type="journal article" date="1999" name="Biochemistry">
        <title>Solution structure of the sodium channel inactivation gate.</title>
        <authorList>
            <person name="Rohl C.A."/>
            <person name="Boeckman F.A."/>
            <person name="Baker C."/>
            <person name="Scheuer T."/>
            <person name="Catterall W.A."/>
            <person name="Klevit R.E."/>
        </authorList>
    </citation>
    <scope>STRUCTURE BY NMR OF 1474-1526</scope>
    <scope>FUNCTION</scope>
    <scope>SUBCELLULAR LOCATION</scope>
    <scope>MUTAGENESIS OF PHE-1489</scope>
</reference>
<reference key="15">
    <citation type="journal article" date="2011" name="Structure">
        <title>Structural and energetic determinants of apo calmodulin binding to the IQ motif of the Na(V)1.2 voltage-dependent sodium channel.</title>
        <authorList>
            <person name="Feldkamp M.D."/>
            <person name="Yu L."/>
            <person name="Shea M.A."/>
        </authorList>
    </citation>
    <scope>STRUCTURE BY NMR OF 1901-1927 IN COMPLEX WITH CALM</scope>
    <scope>INTERACTION WITH CALM</scope>
</reference>
<reference key="16">
    <citation type="journal article" date="2016" name="Elife">
        <title>Binary architecture of the Nav1.2-beta2 signaling complex.</title>
        <authorList>
            <person name="Das S."/>
            <person name="Gilchrist J."/>
            <person name="Bosmans F."/>
            <person name="Van Petegem F."/>
        </authorList>
    </citation>
    <scope>SUBUNIT</scope>
    <scope>DISULFIDE BOND</scope>
</reference>
<reference key="17">
    <citation type="journal article" date="2016" name="Elife">
        <title>SUMOylation of NaV1.2 channels mediates the early response to acute hypoxia in central neurons.</title>
        <authorList>
            <person name="Plant L.D."/>
            <person name="Marks J.D."/>
            <person name="Goldstein S.A."/>
        </authorList>
    </citation>
    <scope>FUNCTION</scope>
    <scope>TRANSPORTER ACTIVITY</scope>
    <scope>SUMOYLATION AT LYS-38</scope>
    <scope>SUBCELLULAR LOCATION</scope>
    <scope>MUTAGENESIS OF LYS-38</scope>
</reference>
<accession>P04775</accession>
<dbReference type="EMBL" id="X03639">
    <property type="protein sequence ID" value="CAA27287.1"/>
    <property type="molecule type" value="mRNA"/>
</dbReference>
<dbReference type="RefSeq" id="NP_036779.1">
    <property type="nucleotide sequence ID" value="NM_012647.1"/>
</dbReference>
<dbReference type="PDB" id="1BYY">
    <property type="method" value="NMR"/>
    <property type="chains" value="A=1474-1526"/>
</dbReference>
<dbReference type="PDB" id="2KXW">
    <property type="method" value="NMR"/>
    <property type="chains" value="B=1901-1927"/>
</dbReference>
<dbReference type="PDB" id="2M5E">
    <property type="method" value="NMR"/>
    <property type="chains" value="B=1901-1927"/>
</dbReference>
<dbReference type="PDBsum" id="1BYY"/>
<dbReference type="PDBsum" id="2KXW"/>
<dbReference type="PDBsum" id="2M5E"/>
<dbReference type="BMRB" id="P04775"/>
<dbReference type="SMR" id="P04775"/>
<dbReference type="BioGRID" id="246890">
    <property type="interactions" value="6"/>
</dbReference>
<dbReference type="CORUM" id="P04775"/>
<dbReference type="DIP" id="DIP-57088N"/>
<dbReference type="FunCoup" id="P04775">
    <property type="interactions" value="2322"/>
</dbReference>
<dbReference type="IntAct" id="P04775">
    <property type="interactions" value="2"/>
</dbReference>
<dbReference type="STRING" id="10116.ENSRNOP00000007069"/>
<dbReference type="BindingDB" id="P04775"/>
<dbReference type="ChEMBL" id="CHEMBL3399"/>
<dbReference type="DrugCentral" id="P04775"/>
<dbReference type="GuidetoPHARMACOLOGY" id="579"/>
<dbReference type="GlyCosmos" id="P04775">
    <property type="glycosylation" value="10 sites, No reported glycans"/>
</dbReference>
<dbReference type="GlyGen" id="P04775">
    <property type="glycosylation" value="10 sites"/>
</dbReference>
<dbReference type="iPTMnet" id="P04775"/>
<dbReference type="PhosphoSitePlus" id="P04775"/>
<dbReference type="SwissPalm" id="P04775"/>
<dbReference type="PaxDb" id="10116-ENSRNOP00000007069"/>
<dbReference type="ABCD" id="P04775">
    <property type="antibodies" value="1 sequenced antibody"/>
</dbReference>
<dbReference type="GeneID" id="24766"/>
<dbReference type="KEGG" id="rno:24766"/>
<dbReference type="UCSC" id="RGD:3632">
    <property type="organism name" value="rat"/>
</dbReference>
<dbReference type="AGR" id="RGD:3632"/>
<dbReference type="CTD" id="6326"/>
<dbReference type="RGD" id="3632">
    <property type="gene designation" value="Scn2a"/>
</dbReference>
<dbReference type="eggNOG" id="KOG2301">
    <property type="taxonomic scope" value="Eukaryota"/>
</dbReference>
<dbReference type="InParanoid" id="P04775"/>
<dbReference type="PhylomeDB" id="P04775"/>
<dbReference type="EvolutionaryTrace" id="P04775"/>
<dbReference type="PRO" id="PR:P04775"/>
<dbReference type="Proteomes" id="UP000002494">
    <property type="component" value="Unplaced"/>
</dbReference>
<dbReference type="GO" id="GO:0030424">
    <property type="term" value="C:axon"/>
    <property type="evidence" value="ECO:0000314"/>
    <property type="project" value="RGD"/>
</dbReference>
<dbReference type="GO" id="GO:0043194">
    <property type="term" value="C:axon initial segment"/>
    <property type="evidence" value="ECO:0000314"/>
    <property type="project" value="RGD"/>
</dbReference>
<dbReference type="GO" id="GO:0098978">
    <property type="term" value="C:glutamatergic synapse"/>
    <property type="evidence" value="ECO:0000266"/>
    <property type="project" value="RGD"/>
</dbReference>
<dbReference type="GO" id="GO:0014704">
    <property type="term" value="C:intercalated disc"/>
    <property type="evidence" value="ECO:0000266"/>
    <property type="project" value="RGD"/>
</dbReference>
<dbReference type="GO" id="GO:0016020">
    <property type="term" value="C:membrane"/>
    <property type="evidence" value="ECO:0000266"/>
    <property type="project" value="RGD"/>
</dbReference>
<dbReference type="GO" id="GO:0033268">
    <property type="term" value="C:node of Ranvier"/>
    <property type="evidence" value="ECO:0000314"/>
    <property type="project" value="BHF-UCL"/>
</dbReference>
<dbReference type="GO" id="GO:0033270">
    <property type="term" value="C:paranode region of axon"/>
    <property type="evidence" value="ECO:0000266"/>
    <property type="project" value="RGD"/>
</dbReference>
<dbReference type="GO" id="GO:0005886">
    <property type="term" value="C:plasma membrane"/>
    <property type="evidence" value="ECO:0000314"/>
    <property type="project" value="UniProtKB"/>
</dbReference>
<dbReference type="GO" id="GO:0042734">
    <property type="term" value="C:presynaptic membrane"/>
    <property type="evidence" value="ECO:0000266"/>
    <property type="project" value="RGD"/>
</dbReference>
<dbReference type="GO" id="GO:0030315">
    <property type="term" value="C:T-tubule"/>
    <property type="evidence" value="ECO:0000266"/>
    <property type="project" value="RGD"/>
</dbReference>
<dbReference type="GO" id="GO:0001518">
    <property type="term" value="C:voltage-gated sodium channel complex"/>
    <property type="evidence" value="ECO:0000314"/>
    <property type="project" value="UniProtKB"/>
</dbReference>
<dbReference type="GO" id="GO:0005516">
    <property type="term" value="F:calmodulin binding"/>
    <property type="evidence" value="ECO:0000266"/>
    <property type="project" value="RGD"/>
</dbReference>
<dbReference type="GO" id="GO:0043522">
    <property type="term" value="F:leucine zipper domain binding"/>
    <property type="evidence" value="ECO:0000353"/>
    <property type="project" value="RGD"/>
</dbReference>
<dbReference type="GO" id="GO:0099508">
    <property type="term" value="F:voltage-gated monoatomic ion channel activity involved in regulation of presynaptic membrane potential"/>
    <property type="evidence" value="ECO:0000314"/>
    <property type="project" value="SynGO"/>
</dbReference>
<dbReference type="GO" id="GO:0005248">
    <property type="term" value="F:voltage-gated sodium channel activity"/>
    <property type="evidence" value="ECO:0000314"/>
    <property type="project" value="UniProtKB"/>
</dbReference>
<dbReference type="GO" id="GO:0061564">
    <property type="term" value="P:axon development"/>
    <property type="evidence" value="ECO:0000270"/>
    <property type="project" value="RGD"/>
</dbReference>
<dbReference type="GO" id="GO:0071456">
    <property type="term" value="P:cellular response to hypoxia"/>
    <property type="evidence" value="ECO:0000314"/>
    <property type="project" value="UniProtKB"/>
</dbReference>
<dbReference type="GO" id="GO:0021987">
    <property type="term" value="P:cerebral cortex development"/>
    <property type="evidence" value="ECO:0000270"/>
    <property type="project" value="RGD"/>
</dbReference>
<dbReference type="GO" id="GO:0022038">
    <property type="term" value="P:corpus callosum development"/>
    <property type="evidence" value="ECO:0000270"/>
    <property type="project" value="RGD"/>
</dbReference>
<dbReference type="GO" id="GO:0021542">
    <property type="term" value="P:dentate gyrus development"/>
    <property type="evidence" value="ECO:0000266"/>
    <property type="project" value="RGD"/>
</dbReference>
<dbReference type="GO" id="GO:0008340">
    <property type="term" value="P:determination of adult lifespan"/>
    <property type="evidence" value="ECO:0000266"/>
    <property type="project" value="RGD"/>
</dbReference>
<dbReference type="GO" id="GO:0008627">
    <property type="term" value="P:intrinsic apoptotic signaling pathway in response to osmotic stress"/>
    <property type="evidence" value="ECO:0000250"/>
    <property type="project" value="UniProtKB"/>
</dbReference>
<dbReference type="GO" id="GO:0086010">
    <property type="term" value="P:membrane depolarization during action potential"/>
    <property type="evidence" value="ECO:0000318"/>
    <property type="project" value="GO_Central"/>
</dbReference>
<dbReference type="GO" id="GO:0007613">
    <property type="term" value="P:memory"/>
    <property type="evidence" value="ECO:0000250"/>
    <property type="project" value="UniProtKB"/>
</dbReference>
<dbReference type="GO" id="GO:0042552">
    <property type="term" value="P:myelination"/>
    <property type="evidence" value="ECO:0000270"/>
    <property type="project" value="BHF-UCL"/>
</dbReference>
<dbReference type="GO" id="GO:0021675">
    <property type="term" value="P:nerve development"/>
    <property type="evidence" value="ECO:0000266"/>
    <property type="project" value="RGD"/>
</dbReference>
<dbReference type="GO" id="GO:0007399">
    <property type="term" value="P:nervous system development"/>
    <property type="evidence" value="ECO:0000250"/>
    <property type="project" value="UniProtKB"/>
</dbReference>
<dbReference type="GO" id="GO:0051402">
    <property type="term" value="P:neuron apoptotic process"/>
    <property type="evidence" value="ECO:0000250"/>
    <property type="project" value="UniProtKB"/>
</dbReference>
<dbReference type="GO" id="GO:0019228">
    <property type="term" value="P:neuronal action potential"/>
    <property type="evidence" value="ECO:0000314"/>
    <property type="project" value="UniProtKB"/>
</dbReference>
<dbReference type="GO" id="GO:0021554">
    <property type="term" value="P:optic nerve development"/>
    <property type="evidence" value="ECO:0000270"/>
    <property type="project" value="RGD"/>
</dbReference>
<dbReference type="GO" id="GO:0035725">
    <property type="term" value="P:sodium ion transmembrane transport"/>
    <property type="evidence" value="ECO:0000314"/>
    <property type="project" value="UniProtKB"/>
</dbReference>
<dbReference type="GO" id="GO:0006814">
    <property type="term" value="P:sodium ion transport"/>
    <property type="evidence" value="ECO:0000314"/>
    <property type="project" value="RGD"/>
</dbReference>
<dbReference type="CDD" id="cd13433">
    <property type="entry name" value="Na_channel_gate"/>
    <property type="match status" value="1"/>
</dbReference>
<dbReference type="DisProt" id="DP02624"/>
<dbReference type="FunFam" id="1.10.238.10:FF:000002">
    <property type="entry name" value="Sodium channel protein"/>
    <property type="match status" value="1"/>
</dbReference>
<dbReference type="FunFam" id="1.10.287.70:FF:000001">
    <property type="entry name" value="Sodium channel protein"/>
    <property type="match status" value="1"/>
</dbReference>
<dbReference type="FunFam" id="1.10.287.70:FF:000003">
    <property type="entry name" value="Sodium channel protein"/>
    <property type="match status" value="1"/>
</dbReference>
<dbReference type="FunFam" id="1.10.287.70:FF:000006">
    <property type="entry name" value="Sodium channel protein"/>
    <property type="match status" value="1"/>
</dbReference>
<dbReference type="FunFam" id="1.20.120.350:FF:000002">
    <property type="entry name" value="Sodium channel protein"/>
    <property type="match status" value="1"/>
</dbReference>
<dbReference type="FunFam" id="1.20.120.350:FF:000004">
    <property type="entry name" value="Sodium channel protein"/>
    <property type="match status" value="1"/>
</dbReference>
<dbReference type="FunFam" id="1.20.120.350:FF:000005">
    <property type="entry name" value="Sodium channel protein"/>
    <property type="match status" value="1"/>
</dbReference>
<dbReference type="FunFam" id="1.20.5.1190:FF:000001">
    <property type="entry name" value="Sodium channel protein"/>
    <property type="match status" value="1"/>
</dbReference>
<dbReference type="FunFam" id="1.20.120.350:FF:000003">
    <property type="entry name" value="Voltage-dependent sodium channel"/>
    <property type="match status" value="1"/>
</dbReference>
<dbReference type="Gene3D" id="1.10.287.70">
    <property type="match status" value="4"/>
</dbReference>
<dbReference type="Gene3D" id="1.10.238.10">
    <property type="entry name" value="EF-hand"/>
    <property type="match status" value="1"/>
</dbReference>
<dbReference type="Gene3D" id="1.20.5.1190">
    <property type="entry name" value="iswi atpase"/>
    <property type="match status" value="1"/>
</dbReference>
<dbReference type="Gene3D" id="1.20.120.350">
    <property type="entry name" value="Voltage-gated potassium channels. Chain C"/>
    <property type="match status" value="4"/>
</dbReference>
<dbReference type="InterPro" id="IPR005821">
    <property type="entry name" value="Ion_trans_dom"/>
</dbReference>
<dbReference type="InterPro" id="IPR000048">
    <property type="entry name" value="IQ_motif_EF-hand-BS"/>
</dbReference>
<dbReference type="InterPro" id="IPR001696">
    <property type="entry name" value="Na_channel_asu"/>
</dbReference>
<dbReference type="InterPro" id="IPR044564">
    <property type="entry name" value="Na_chnl_inactivation_gate"/>
</dbReference>
<dbReference type="InterPro" id="IPR010526">
    <property type="entry name" value="Na_trans_assoc_dom"/>
</dbReference>
<dbReference type="InterPro" id="IPR024583">
    <property type="entry name" value="Na_trans_cytopl"/>
</dbReference>
<dbReference type="InterPro" id="IPR043203">
    <property type="entry name" value="VGCC_Ca_Na"/>
</dbReference>
<dbReference type="InterPro" id="IPR027359">
    <property type="entry name" value="Volt_channel_dom_sf"/>
</dbReference>
<dbReference type="PANTHER" id="PTHR10037:SF278">
    <property type="entry name" value="SODIUM CHANNEL PROTEIN TYPE 2 SUBUNIT ALPHA"/>
    <property type="match status" value="1"/>
</dbReference>
<dbReference type="PANTHER" id="PTHR10037">
    <property type="entry name" value="VOLTAGE-GATED CATION CHANNEL CALCIUM AND SODIUM"/>
    <property type="match status" value="1"/>
</dbReference>
<dbReference type="Pfam" id="PF00520">
    <property type="entry name" value="Ion_trans"/>
    <property type="match status" value="4"/>
</dbReference>
<dbReference type="Pfam" id="PF24609">
    <property type="entry name" value="IQ_SCN5A_C"/>
    <property type="match status" value="1"/>
</dbReference>
<dbReference type="Pfam" id="PF06512">
    <property type="entry name" value="Na_trans_assoc"/>
    <property type="match status" value="1"/>
</dbReference>
<dbReference type="Pfam" id="PF11933">
    <property type="entry name" value="Na_trans_cytopl"/>
    <property type="match status" value="1"/>
</dbReference>
<dbReference type="PRINTS" id="PR00170">
    <property type="entry name" value="NACHANNEL"/>
</dbReference>
<dbReference type="SMART" id="SM00015">
    <property type="entry name" value="IQ"/>
    <property type="match status" value="1"/>
</dbReference>
<dbReference type="SUPFAM" id="SSF81324">
    <property type="entry name" value="Voltage-gated potassium channels"/>
    <property type="match status" value="4"/>
</dbReference>
<dbReference type="PROSITE" id="PS50096">
    <property type="entry name" value="IQ"/>
    <property type="match status" value="1"/>
</dbReference>
<sequence>MARSVLVPPGPDSFRFFTRESLAAIEQRIAEEKAKRPKQERKDEDDENGPKPNSDLEAGKSLPFIYGDIPPEMVSEPLEDLDPYYINKKTFIVLNKGKAISRFSATSALYILTPFNPIRKLAIKILVHSLFNVLIMCTILTNCVFMTMSNPPDWTKNVEYTFTGIYTFESLIKILARGFCLEDFTFLRNPWNWLDFTVITFAYVTEFVNLGNVSALRTFRVLRALKTISVIPGLKTIVGALIQSVKKLSDVMILTVFCLSVFALIGLQLFMGNLRNKCLQWPPDNSTFEINITSFFNNSLDWNGTAFNRTVNMFNWDEYIEDKSHFYFLEGQNDALLCGNSSDAGQCPEGYICVKAGRNPNYGYTSFDTFSWAFLSLFRLMTQDFWENLYQLTLRAAGKTYMIFFVLVIFLGSFYLINLILAVVAMAYEEQNQATLEEAEQKEAEFQQMLEQLKKQQEEAQAAAAAASAESRDFSGAGGIGVFSESSSVASKLSSKSEKELKNRRKKKKQKEQAGEEEKEDAVRKSASEDSIRKKGFQFSLEGSRLTYEKRFSSPHQSLLSIRGSLFSPRRNSRASLFNFKGRVKDIGSENDFADDEHSTFEDNDSRRDSLFVPHRHGERRPSNVSQASRASRGIPTLPMNGKMHSAVDCNGVVSLVGGPSALTSPVGQLLPEGTTTETEIRKRRSSSYHVSMDLLEDPSRQRAMSMASILTNTMEELEESRQKCPPCWYKFANMCLIWDCCKPWLKVKHVVNLVVMDPFVDLAITICIVLNTLFMAMEHYPMTEQFSSVLSVGNLVFTGIFTAEMFLKIIAMDPYYYFQEGWNIFDGFIVSLSLMELGLANVEGLSVLRSFRLLRVFKLAKSWPTLNMLIKIIGNSVGALGNLTLVLAIIVFIFAVVGMQLFGKSYKECVCKISNDCELPRWHMHHFFHSFLIVFRVLCGEWIETMWDCMEVAGQTMCLTVFMMVMVIGNLVVLNLFLALLLSSFSSDNLAATDDDNEMNNLQIAVGRMQKGIDFVKRKIREFIQKAFVRKQKALDEIKPLEDLNNKKDSCISNHTTIEIGKDLNYLKDGNGTTSGIGSSVEKYVVDESDYMSFINNPSLTVTVPIALGESDFENLNTEEFSSESDMEESKEKLNATSSSEGSTVDIGAPAEGEQPEAEPEESLEPEACFTEDCVRKFKCCQISIEEGKGKLWWNLRKTCYKIVEHNWFETFIVFMILLSSGALAFEDIYIEQRKTIKTMLEYADKVFTYIFILEMLLKWVAYGFQMYFTNAWCWLDFLIVDVSLVSLTANALGYSELGAIKSLRTLRALRPLRALSRFEGMRVVVNALLGAIPSIMNVLLVCLIFWLIFSIMGVNLFAGKFYHCINYTTGEMFDVSVVNNYSECQALIESNQTARWKNVKVNFDNVGLGYLSLLQVATFKGWMDIMYAAVDSRNVELQPKYEDNLYMYLYFVIFIIFGSFFTLNLFIGVIIDNFNQQKKKFGGQDIFMTEEQKKYYNAMKKLGSKKPQKPIPRPANKFQGMVFDFVTKQVFDISIMILICLNMVTMMVETDDQSQEMTNILYWINLVFIVLFTGECVLKLISLRHYYFTIGWNIFDFVVVILSIVGMFLAELIEKYFVSPTLFRVIRLARIGRILRLIKGAKGIRTLLFALMMSLPALFNIGLLLFLVMFIYAIFGMSNFAYVKREVGIDDMFNFETFGNSMICLFQITTSAGWDGLLAPILNSGPPDCDPEKDHPGSSVKGDCGNPSVGIFFFVSYIIISFLVVVNMYIAVILENFSVATEESAEPLSEDDFEMFYEVWEKFDPDATQFIEFCKLSDFAAALDPPLLIAKPNKVQLIAMDLPMVSGDRIHCLDILFAFTKRVLGESGEMDALRIQMEERFMASNPSKVSYEPITTTLKRKQEEVSAIVIQRAYRRYLLKQKVKKVSSIYKKDKGKEDEGTPIKEDIITDKLNENSTPEKTDVTPSTTSPPSYDSVTKPEKEKFEKDKSEKEDKGKDIRESKK</sequence>
<proteinExistence type="evidence at protein level"/>
<organism>
    <name type="scientific">Rattus norvegicus</name>
    <name type="common">Rat</name>
    <dbReference type="NCBI Taxonomy" id="10116"/>
    <lineage>
        <taxon>Eukaryota</taxon>
        <taxon>Metazoa</taxon>
        <taxon>Chordata</taxon>
        <taxon>Craniata</taxon>
        <taxon>Vertebrata</taxon>
        <taxon>Euteleostomi</taxon>
        <taxon>Mammalia</taxon>
        <taxon>Eutheria</taxon>
        <taxon>Euarchontoglires</taxon>
        <taxon>Glires</taxon>
        <taxon>Rodentia</taxon>
        <taxon>Myomorpha</taxon>
        <taxon>Muroidea</taxon>
        <taxon>Muridae</taxon>
        <taxon>Murinae</taxon>
        <taxon>Rattus</taxon>
    </lineage>
</organism>
<feature type="chain" id="PRO_0000048492" description="Sodium channel protein type 2 subunit alpha">
    <location>
        <begin position="1"/>
        <end position="2005"/>
    </location>
</feature>
<feature type="topological domain" description="Cytoplasmic" evidence="22">
    <location>
        <begin position="1"/>
        <end position="129"/>
    </location>
</feature>
<feature type="transmembrane region" description="Helical; Name=S1 of repeat I" evidence="2">
    <location>
        <begin position="130"/>
        <end position="148"/>
    </location>
</feature>
<feature type="topological domain" description="Extracellular" evidence="22">
    <location>
        <begin position="149"/>
        <end position="155"/>
    </location>
</feature>
<feature type="transmembrane region" description="Helical; Name=S2 of repeat I" evidence="2">
    <location>
        <begin position="156"/>
        <end position="176"/>
    </location>
</feature>
<feature type="topological domain" description="Cytoplasmic" evidence="22">
    <location>
        <begin position="177"/>
        <end position="190"/>
    </location>
</feature>
<feature type="transmembrane region" description="Helical; Name=S3 of repeat I" evidence="2">
    <location>
        <begin position="191"/>
        <end position="208"/>
    </location>
</feature>
<feature type="topological domain" description="Extracellular" evidence="22">
    <location>
        <begin position="209"/>
        <end position="214"/>
    </location>
</feature>
<feature type="transmembrane region" description="Helical; Name=S4 of repeat I" evidence="2">
    <location>
        <begin position="215"/>
        <end position="231"/>
    </location>
</feature>
<feature type="topological domain" description="Cytoplasmic" evidence="22">
    <location>
        <begin position="232"/>
        <end position="250"/>
    </location>
</feature>
<feature type="transmembrane region" description="Helical; Name=S5 of repeat I" evidence="2">
    <location>
        <begin position="251"/>
        <end position="270"/>
    </location>
</feature>
<feature type="topological domain" description="Extracellular" evidence="22">
    <location>
        <begin position="271"/>
        <end position="369"/>
    </location>
</feature>
<feature type="intramembrane region" description="Pore-forming" evidence="2">
    <location>
        <begin position="370"/>
        <end position="394"/>
    </location>
</feature>
<feature type="topological domain" description="Extracellular" evidence="22">
    <location>
        <begin position="395"/>
        <end position="401"/>
    </location>
</feature>
<feature type="transmembrane region" description="Helical; Name=S6 of repeat I" evidence="2">
    <location>
        <begin position="402"/>
        <end position="422"/>
    </location>
</feature>
<feature type="topological domain" description="Cytoplasmic" evidence="22">
    <location>
        <begin position="423"/>
        <end position="759"/>
    </location>
</feature>
<feature type="transmembrane region" description="Helical; Name=S1 of repeat II" evidence="2">
    <location>
        <begin position="760"/>
        <end position="778"/>
    </location>
</feature>
<feature type="topological domain" description="Extracellular" evidence="22">
    <location>
        <begin position="779"/>
        <end position="789"/>
    </location>
</feature>
<feature type="transmembrane region" description="Helical; Name=S2 of repeat II" evidence="2">
    <location>
        <begin position="790"/>
        <end position="809"/>
    </location>
</feature>
<feature type="topological domain" description="Cytoplasmic" evidence="22">
    <location>
        <begin position="810"/>
        <end position="823"/>
    </location>
</feature>
<feature type="transmembrane region" description="Helical; Name=S3 of repeat II" evidence="2">
    <location>
        <begin position="824"/>
        <end position="843"/>
    </location>
</feature>
<feature type="topological domain" description="Extracellular" evidence="22">
    <location>
        <begin position="844"/>
        <end position="845"/>
    </location>
</feature>
<feature type="transmembrane region" description="Helical; Name=S4 of repeat II" evidence="2">
    <location>
        <begin position="846"/>
        <end position="863"/>
    </location>
</feature>
<feature type="topological domain" description="Cytoplasmic" evidence="22">
    <location>
        <begin position="864"/>
        <end position="879"/>
    </location>
</feature>
<feature type="transmembrane region" description="Helical; Name=S5 of repeat II" evidence="2">
    <location>
        <begin position="880"/>
        <end position="898"/>
    </location>
</feature>
<feature type="topological domain" description="Extracellular" evidence="22">
    <location>
        <begin position="899"/>
        <end position="927"/>
    </location>
</feature>
<feature type="intramembrane region" description="Pore-forming" evidence="2">
    <location>
        <begin position="928"/>
        <end position="948"/>
    </location>
</feature>
<feature type="topological domain" description="Extracellular" evidence="22">
    <location>
        <begin position="949"/>
        <end position="961"/>
    </location>
</feature>
<feature type="transmembrane region" description="Helical; Name=S6 of repeat II" evidence="2">
    <location>
        <begin position="962"/>
        <end position="982"/>
    </location>
</feature>
<feature type="topological domain" description="Cytoplasmic" evidence="22">
    <location>
        <begin position="983"/>
        <end position="1209"/>
    </location>
</feature>
<feature type="transmembrane region" description="Helical; Name=S1 of repeat III" evidence="2">
    <location>
        <begin position="1210"/>
        <end position="1227"/>
    </location>
</feature>
<feature type="topological domain" description="Extracellular" evidence="22">
    <location>
        <begin position="1228"/>
        <end position="1240"/>
    </location>
</feature>
<feature type="transmembrane region" description="Helical; Name=S2 of repeat III" evidence="2">
    <location>
        <begin position="1241"/>
        <end position="1259"/>
    </location>
</feature>
<feature type="topological domain" description="Cytoplasmic" evidence="22">
    <location>
        <begin position="1260"/>
        <end position="1273"/>
    </location>
</feature>
<feature type="transmembrane region" description="Helical; Name=S3 of repeat III" evidence="2">
    <location>
        <begin position="1274"/>
        <end position="1292"/>
    </location>
</feature>
<feature type="topological domain" description="Extracellular" evidence="22">
    <location>
        <begin position="1293"/>
        <end position="1300"/>
    </location>
</feature>
<feature type="transmembrane region" description="Helical; Name=S4 of repeat III" evidence="2">
    <location>
        <begin position="1301"/>
        <end position="1319"/>
    </location>
</feature>
<feature type="topological domain" description="Cytoplasmic" evidence="22">
    <location>
        <begin position="1320"/>
        <end position="1336"/>
    </location>
</feature>
<feature type="transmembrane region" description="Helical; Name=S5 of repeat III" evidence="2">
    <location>
        <begin position="1337"/>
        <end position="1356"/>
    </location>
</feature>
<feature type="topological domain" description="Extracellular" evidence="22">
    <location>
        <begin position="1357"/>
        <end position="1408"/>
    </location>
</feature>
<feature type="intramembrane region" description="Pore-forming" evidence="2">
    <location>
        <begin position="1409"/>
        <end position="1430"/>
    </location>
</feature>
<feature type="topological domain" description="Extracellular" evidence="22">
    <location>
        <begin position="1431"/>
        <end position="1447"/>
    </location>
</feature>
<feature type="transmembrane region" description="Helical; Name=S6 of repeat III" evidence="2">
    <location>
        <begin position="1448"/>
        <end position="1469"/>
    </location>
</feature>
<feature type="topological domain" description="Cytoplasmic" evidence="22">
    <location>
        <begin position="1470"/>
        <end position="1532"/>
    </location>
</feature>
<feature type="transmembrane region" description="Helical; Name=S1 of repeat IV" evidence="2">
    <location>
        <begin position="1533"/>
        <end position="1550"/>
    </location>
</feature>
<feature type="topological domain" description="Extracellular" evidence="22">
    <location>
        <begin position="1551"/>
        <end position="1561"/>
    </location>
</feature>
<feature type="transmembrane region" description="Helical; Name=S2 of repeat IV" evidence="2">
    <location>
        <begin position="1562"/>
        <end position="1580"/>
    </location>
</feature>
<feature type="topological domain" description="Cytoplasmic" evidence="22">
    <location>
        <begin position="1581"/>
        <end position="1592"/>
    </location>
</feature>
<feature type="transmembrane region" description="Helical; Name=S3 of repeat IV" evidence="2">
    <location>
        <begin position="1593"/>
        <end position="1610"/>
    </location>
</feature>
<feature type="topological domain" description="Extracellular" evidence="22">
    <location>
        <begin position="1611"/>
        <end position="1623"/>
    </location>
</feature>
<feature type="transmembrane region" description="Helical; Name=S4 of repeat IV" evidence="2">
    <location>
        <begin position="1624"/>
        <end position="1640"/>
    </location>
</feature>
<feature type="topological domain" description="Cytoplasmic" evidence="22">
    <location>
        <begin position="1641"/>
        <end position="1659"/>
    </location>
</feature>
<feature type="transmembrane region" description="Helical; Name=S5 of repeat IV" evidence="2">
    <location>
        <begin position="1660"/>
        <end position="1677"/>
    </location>
</feature>
<feature type="topological domain" description="Extracellular" evidence="22">
    <location>
        <begin position="1678"/>
        <end position="1699"/>
    </location>
</feature>
<feature type="intramembrane region" description="Pore-forming" evidence="2">
    <location>
        <begin position="1700"/>
        <end position="1722"/>
    </location>
</feature>
<feature type="topological domain" description="Extracellular" evidence="22">
    <location>
        <begin position="1723"/>
        <end position="1752"/>
    </location>
</feature>
<feature type="transmembrane region" description="Helical; Name=S6 of repeat IV" evidence="2">
    <location>
        <begin position="1753"/>
        <end position="1775"/>
    </location>
</feature>
<feature type="topological domain" description="Cytoplasmic" evidence="22">
    <location>
        <begin position="1776"/>
        <end position="2005"/>
    </location>
</feature>
<feature type="repeat" description="I" evidence="22">
    <location>
        <begin position="111"/>
        <end position="456"/>
    </location>
</feature>
<feature type="repeat" description="II" evidence="22">
    <location>
        <begin position="741"/>
        <end position="1013"/>
    </location>
</feature>
<feature type="repeat" description="III" evidence="22">
    <location>
        <begin position="1190"/>
        <end position="1504"/>
    </location>
</feature>
<feature type="repeat" description="IV" evidence="22">
    <location>
        <begin position="1513"/>
        <end position="1811"/>
    </location>
</feature>
<feature type="domain" description="IQ" evidence="6">
    <location>
        <begin position="1905"/>
        <end position="1934"/>
    </location>
</feature>
<feature type="region of interest" description="Disordered" evidence="7">
    <location>
        <begin position="28"/>
        <end position="61"/>
    </location>
</feature>
<feature type="region of interest" description="Disordered" evidence="7">
    <location>
        <begin position="494"/>
        <end position="529"/>
    </location>
</feature>
<feature type="region of interest" description="Disordered" evidence="7">
    <location>
        <begin position="591"/>
        <end position="634"/>
    </location>
</feature>
<feature type="region of interest" description="Binds SCN2B" evidence="4">
    <location>
        <begin position="917"/>
        <end position="918"/>
    </location>
</feature>
<feature type="region of interest" description="Disordered" evidence="7">
    <location>
        <begin position="1120"/>
        <end position="1166"/>
    </location>
</feature>
<feature type="region of interest" description="Disordered" evidence="7">
    <location>
        <begin position="1933"/>
        <end position="2005"/>
    </location>
</feature>
<feature type="compositionally biased region" description="Basic and acidic residues" evidence="7">
    <location>
        <begin position="511"/>
        <end position="529"/>
    </location>
</feature>
<feature type="compositionally biased region" description="Basic and acidic residues" evidence="7">
    <location>
        <begin position="596"/>
        <end position="610"/>
    </location>
</feature>
<feature type="compositionally biased region" description="Acidic residues" evidence="7">
    <location>
        <begin position="1155"/>
        <end position="1166"/>
    </location>
</feature>
<feature type="compositionally biased region" description="Basic and acidic residues" evidence="7">
    <location>
        <begin position="1933"/>
        <end position="1964"/>
    </location>
</feature>
<feature type="compositionally biased region" description="Basic and acidic residues" evidence="7">
    <location>
        <begin position="1979"/>
        <end position="2005"/>
    </location>
</feature>
<feature type="site" description="Binds Mu-conotoxin KIIIA" evidence="4">
    <location>
        <position position="330"/>
    </location>
</feature>
<feature type="site" description="Binds Mu-conotoxin KIIIA" evidence="4">
    <location>
        <position position="362"/>
    </location>
</feature>
<feature type="site" description="Binds SCN2B; via carbonyl oxygen" evidence="4">
    <location>
        <position position="909"/>
    </location>
</feature>
<feature type="site" description="Binds Mu-conotoxin KIIIA; via amide nitrogen" evidence="4">
    <location>
        <position position="916"/>
    </location>
</feature>
<feature type="site" description="Binds Mu-conotoxin KIIIA; via carbonyl oxygen" evidence="4">
    <location>
        <position position="920"/>
    </location>
</feature>
<feature type="site" description="Binds Mu-conotoxin KIIIA" evidence="4">
    <location>
        <position position="945"/>
    </location>
</feature>
<feature type="site" description="Binds Mu-conotoxin KIIIA" evidence="4">
    <location>
        <position position="949"/>
    </location>
</feature>
<feature type="site" description="Binds Mu-conotoxin KIIIA; via amide nitrogen" evidence="4">
    <location>
        <position position="1374"/>
    </location>
</feature>
<feature type="site" description="Binds Mu-conotoxin KIIIA" evidence="4">
    <location>
        <position position="1429"/>
    </location>
</feature>
<feature type="site" description="Binds Mu-conotoxin KIIIA" evidence="4">
    <location>
        <position position="1443"/>
    </location>
</feature>
<feature type="site" description="Important for channel closure">
    <location>
        <position position="1489"/>
    </location>
</feature>
<feature type="modified residue" description="Phosphoserine" evidence="13">
    <location>
        <position position="4"/>
    </location>
</feature>
<feature type="modified residue" description="Phosphoserine" evidence="13">
    <location>
        <position position="468"/>
    </location>
</feature>
<feature type="modified residue" description="Phosphoserine" evidence="13">
    <location>
        <position position="471"/>
    </location>
</feature>
<feature type="modified residue" description="Phosphoserine" evidence="13 26">
    <location>
        <position position="484"/>
    </location>
</feature>
<feature type="modified residue" description="Phosphoserine" evidence="26">
    <location>
        <position position="526"/>
    </location>
</feature>
<feature type="modified residue" description="Phosphoserine" evidence="13 26">
    <location>
        <position position="528"/>
    </location>
</feature>
<feature type="modified residue" description="Phosphoserine" evidence="26">
    <location>
        <position position="531"/>
    </location>
</feature>
<feature type="modified residue" description="Phosphoserine" evidence="26">
    <location>
        <position position="553"/>
    </location>
</feature>
<feature type="modified residue" description="Phosphoserine" evidence="10 13 26">
    <location>
        <position position="554"/>
    </location>
</feature>
<feature type="modified residue" description="Phosphoserine; by PKC; in vitro" evidence="10 13 26">
    <location>
        <position position="554"/>
    </location>
</feature>
<feature type="modified residue" description="Phosphoserine" evidence="26">
    <location>
        <position position="558"/>
    </location>
</feature>
<feature type="modified residue" description="Phosphoserine; by PKC; in vitro" evidence="10">
    <location>
        <position position="573"/>
    </location>
</feature>
<feature type="modified residue" description="Phosphoserine; by PKC; in vitro" evidence="10">
    <location>
        <position position="576"/>
    </location>
</feature>
<feature type="modified residue" description="Phosphoserine" evidence="26">
    <location>
        <position position="589"/>
    </location>
</feature>
<feature type="modified residue" description="Phosphoserine" evidence="13">
    <location>
        <position position="610"/>
    </location>
</feature>
<feature type="modified residue" description="Phosphoserine" evidence="13">
    <location>
        <position position="623"/>
    </location>
</feature>
<feature type="modified residue" description="Phosphoserine" evidence="13">
    <location>
        <position position="687"/>
    </location>
</feature>
<feature type="modified residue" description="Phosphoserine" evidence="13">
    <location>
        <position position="688"/>
    </location>
</feature>
<feature type="modified residue" description="Phosphoserine" evidence="13 26">
    <location>
        <position position="721"/>
    </location>
</feature>
<feature type="modified residue" description="Phosphoserine; by PKC" evidence="10 12">
    <location>
        <position position="1506"/>
    </location>
</feature>
<feature type="modified residue" description="Phosphoserine" evidence="13">
    <location>
        <position position="1930"/>
    </location>
</feature>
<feature type="modified residue" description="Phosphothreonine" evidence="26">
    <location>
        <position position="1943"/>
    </location>
</feature>
<feature type="modified residue" description="Phosphothreonine" evidence="25">
    <location>
        <position position="1963"/>
    </location>
</feature>
<feature type="modified residue" description="Phosphothreonine" evidence="13">
    <location>
        <position position="1966"/>
    </location>
</feature>
<feature type="modified residue" description="Phosphoserine" evidence="13">
    <location>
        <position position="1971"/>
    </location>
</feature>
<feature type="glycosylation site" description="N-linked (GlcNAc...) asparagine" evidence="5">
    <location>
        <position position="212"/>
    </location>
</feature>
<feature type="glycosylation site" description="N-linked (GlcNAc...) asparagine" evidence="5">
    <location>
        <position position="285"/>
    </location>
</feature>
<feature type="glycosylation site" description="N-linked (GlcNAc...) asparagine" evidence="5">
    <location>
        <position position="291"/>
    </location>
</feature>
<feature type="glycosylation site" description="N-linked (GlcNAc...) asparagine" evidence="5">
    <location>
        <position position="297"/>
    </location>
</feature>
<feature type="glycosylation site" description="N-linked (GlcNAc...) asparagine" evidence="5">
    <location>
        <position position="303"/>
    </location>
</feature>
<feature type="glycosylation site" description="N-linked (GlcNAc...) asparagine" evidence="5">
    <location>
        <position position="308"/>
    </location>
</feature>
<feature type="glycosylation site" description="N-linked (GlcNAc...) asparagine" evidence="5">
    <location>
        <position position="340"/>
    </location>
</feature>
<feature type="glycosylation site" description="N-linked (GlcNAc...) asparagine" evidence="5">
    <location>
        <position position="1368"/>
    </location>
</feature>
<feature type="glycosylation site" description="N-linked (GlcNAc...) asparagine" evidence="5">
    <location>
        <position position="1382"/>
    </location>
</feature>
<feature type="glycosylation site" description="N-linked (GlcNAc...) asparagine" evidence="5">
    <location>
        <position position="1393"/>
    </location>
</feature>
<feature type="disulfide bond" evidence="4">
    <location>
        <begin position="278"/>
        <end position="338"/>
    </location>
</feature>
<feature type="disulfide bond" description="Interchain; with SCN2B or SCN4B" evidence="19 23">
    <location>
        <position position="910"/>
    </location>
</feature>
<feature type="disulfide bond" description="Interchain; with the conotoxin GVIIJ (when the channel is not linked to SCN2B or SCN4B; the bond to SCN2B or SCN4B protects the channel from the inhibition by toxin)" evidence="17">
    <location>
        <position position="910"/>
    </location>
</feature>
<feature type="disulfide bond" evidence="4">
    <location>
        <begin position="912"/>
        <end position="918"/>
    </location>
</feature>
<feature type="disulfide bond" evidence="2">
    <location>
        <begin position="950"/>
        <end position="959"/>
    </location>
</feature>
<feature type="disulfide bond" evidence="4">
    <location>
        <begin position="1366"/>
        <end position="1386"/>
    </location>
</feature>
<feature type="disulfide bond" evidence="4">
    <location>
        <begin position="1731"/>
        <end position="1746"/>
    </location>
</feature>
<feature type="cross-link" description="Glycyl lysine isopeptide (Lys-Gly) (interchain with G-Cter in SUMO1)" evidence="20">
    <location>
        <position position="38"/>
    </location>
</feature>
<feature type="mutagenesis site" description="Abolishes SUMOylation. No increase of voltage-gated sodium current upon hypoxia." evidence="20">
    <original>K</original>
    <variation>Q</variation>
    <location>
        <position position="38"/>
    </location>
</feature>
<feature type="mutagenesis site" description="Sodium current is irreversibly blocked by methanethiosulfonate (MTSET); the mutated Cys residue has a free thiol susceptible to reaction with MTSET, and inhibition of current is due to the fact that the residue is close to the selectivity filter." evidence="3 18">
    <original>F</original>
    <variation>C</variation>
    <location>
        <position position="385"/>
    </location>
</feature>
<feature type="mutagenesis site" description="Slowed inactivation and increased persistent current. Gain of function mutation." evidence="9">
    <original>GAL</original>
    <variation>QQQ</variation>
    <location>
        <begin position="879"/>
        <end position="881"/>
    </location>
</feature>
<feature type="mutagenesis site" description="&gt;1000-fold reduction of sensitivity to the conotoxin GVIIJ(SSG)." evidence="17">
    <original>C</original>
    <variation>L</variation>
    <location>
        <position position="910"/>
    </location>
</feature>
<feature type="mutagenesis site" description="Strongly impairs channel inactivation." evidence="21">
    <original>F</original>
    <variation>Q</variation>
    <location>
        <position position="1489"/>
    </location>
</feature>
<feature type="mutagenesis site" description="Blocks the reduction of Na+ current and the slowing of inactivation caused by PKC." evidence="12">
    <original>S</original>
    <variation>A</variation>
    <location>
        <position position="1506"/>
    </location>
</feature>
<feature type="mutagenesis site" description="Increase in sensitivity to the scorpion toxin BMK M1." evidence="14">
    <original>E</original>
    <variation>D</variation>
    <location>
        <position position="1613"/>
    </location>
</feature>
<feature type="mutagenesis site" description="Abolishes interaction with NEDD4L." evidence="11">
    <original>Y</original>
    <variation>A</variation>
    <location>
        <position position="1975"/>
    </location>
</feature>
<feature type="helix" evidence="27">
    <location>
        <begin position="1492"/>
        <end position="1502"/>
    </location>
</feature>
<feature type="helix" evidence="28">
    <location>
        <begin position="1904"/>
        <end position="1922"/>
    </location>
</feature>
<name>SCN2A_RAT</name>
<protein>
    <recommendedName>
        <fullName evidence="22">Sodium channel protein type 2 subunit alpha</fullName>
    </recommendedName>
    <alternativeName>
        <fullName>Sodium channel protein brain II subunit alpha</fullName>
    </alternativeName>
    <alternativeName>
        <fullName>Sodium channel protein type II subunit alpha</fullName>
    </alternativeName>
    <alternativeName>
        <fullName>Voltage-gated sodium channel subunit alpha Nav1.2</fullName>
    </alternativeName>
</protein>
<keyword id="KW-0002">3D-structure</keyword>
<keyword id="KW-1003">Cell membrane</keyword>
<keyword id="KW-1015">Disulfide bond</keyword>
<keyword id="KW-0325">Glycoprotein</keyword>
<keyword id="KW-0407">Ion channel</keyword>
<keyword id="KW-0406">Ion transport</keyword>
<keyword id="KW-1017">Isopeptide bond</keyword>
<keyword id="KW-0472">Membrane</keyword>
<keyword id="KW-0597">Phosphoprotein</keyword>
<keyword id="KW-1185">Reference proteome</keyword>
<keyword id="KW-0677">Repeat</keyword>
<keyword id="KW-0915">Sodium</keyword>
<keyword id="KW-0894">Sodium channel</keyword>
<keyword id="KW-0739">Sodium transport</keyword>
<keyword id="KW-0812">Transmembrane</keyword>
<keyword id="KW-1133">Transmembrane helix</keyword>
<keyword id="KW-0813">Transport</keyword>
<keyword id="KW-0832">Ubl conjugation</keyword>
<keyword id="KW-0851">Voltage-gated channel</keyword>
<comment type="function">
    <text evidence="1 16 20 21">Mediates the voltage-dependent sodium ion permeability of excitable membranes. Assuming opened or closed conformations in response to the voltage difference across the membrane, the protein forms a sodium-selective channel through which Na(+) ions may pass in accordance with their electrochemical gradient. Implicated in the regulation of hippocampal replay occurring within sharp wave ripples (SPW-R) important for memory (By similarity).</text>
</comment>
<comment type="catalytic activity">
    <reaction evidence="16 20">
        <text>Na(+)(in) = Na(+)(out)</text>
        <dbReference type="Rhea" id="RHEA:34963"/>
        <dbReference type="ChEBI" id="CHEBI:29101"/>
    </reaction>
</comment>
<comment type="subunit">
    <text evidence="4 11 15 16 17 19">Heterooligomer of a large alpha subunit and a smaller beta subunit. Heterooligomer with SCN2B or SCN4B; disulfide-linked (PubMed:26894959). Heterooligomer with SCN1B or SCN3B; non-covalently linked. Interacts with NEDD4L. Interacts with CALM. Interacts with TMEM233 (By similarity). Interacts with the conotoxin GVIIJ (PubMed:24497506). Interacts with the scorpion toxin BMK M1 (PubMed:20678086).</text>
</comment>
<comment type="interaction">
    <interactant intactId="EBI-2619448">
        <id>P04775</id>
    </interactant>
    <interactant intactId="EBI-458098">
        <id>P21707</id>
        <label>Syt1</label>
    </interactant>
    <organismsDiffer>false</organismsDiffer>
    <experiments>2</experiments>
</comment>
<comment type="interaction">
    <interactant intactId="EBI-2619448">
        <id>P04775</id>
    </interactant>
    <interactant intactId="EBI-15916571">
        <id>P07463</id>
        <label>CAM</label>
    </interactant>
    <organismsDiffer>true</organismsDiffer>
    <experiments>2</experiments>
</comment>
<comment type="subcellular location">
    <subcellularLocation>
        <location evidence="8 16 20 21">Cell membrane</location>
        <topology evidence="5">Multi-pass membrane protein</topology>
    </subcellularLocation>
</comment>
<comment type="tissue specificity">
    <text evidence="8 20">Expressed in brain (at protein level) (PubMed:10827969). Expressed in cerebellar granule neurons (at protein level) (PubMed:28029095).</text>
</comment>
<comment type="domain">
    <text evidence="22">The sequence contains 4 internal repeats, each with 5 hydrophobic segments (S1, S2, S3, S5, S6) and one positively charged segment (S4). Segments S4 are probably the voltage-sensors and are characterized by a series of positively charged amino acids at every third position.</text>
</comment>
<comment type="PTM">
    <text>May be ubiquitinated by NEDD4L; which would promote its endocytosis.</text>
</comment>
<comment type="PTM">
    <text evidence="10 12 13">Phosphorylation at Ser-1506 by PKC in a highly conserved cytoplasmic loop slows inactivation of the sodium channel and reduces peak sodium currents.</text>
</comment>
<comment type="PTM">
    <text evidence="20">Sumoylated at Lys-38. Sumoylation is induced by hypoxia, increases voltage-gated sodium current and mediates the early response to acute hypoxia in neurons (PubMed:28029095). Sumoylated SCN2A is located at the cell membrane (PubMed:28029095).</text>
</comment>
<comment type="similarity">
    <text evidence="22">Belongs to the sodium channel (TC 1.A.1.10) family. Nav1.2/SCN2A subfamily.</text>
</comment>